<name>SYD_STAAT</name>
<accession>A8Z2F7</accession>
<reference key="1">
    <citation type="journal article" date="2007" name="BMC Microbiol.">
        <title>Subtle genetic changes enhance virulence of methicillin resistant and sensitive Staphylococcus aureus.</title>
        <authorList>
            <person name="Highlander S.K."/>
            <person name="Hulten K.G."/>
            <person name="Qin X."/>
            <person name="Jiang H."/>
            <person name="Yerrapragada S."/>
            <person name="Mason E.O. Jr."/>
            <person name="Shang Y."/>
            <person name="Williams T.M."/>
            <person name="Fortunov R.M."/>
            <person name="Liu Y."/>
            <person name="Igboeli O."/>
            <person name="Petrosino J."/>
            <person name="Tirumalai M."/>
            <person name="Uzman A."/>
            <person name="Fox G.E."/>
            <person name="Cardenas A.M."/>
            <person name="Muzny D.M."/>
            <person name="Hemphill L."/>
            <person name="Ding Y."/>
            <person name="Dugan S."/>
            <person name="Blyth P.R."/>
            <person name="Buhay C.J."/>
            <person name="Dinh H.H."/>
            <person name="Hawes A.C."/>
            <person name="Holder M."/>
            <person name="Kovar C.L."/>
            <person name="Lee S.L."/>
            <person name="Liu W."/>
            <person name="Nazareth L.V."/>
            <person name="Wang Q."/>
            <person name="Zhou J."/>
            <person name="Kaplan S.L."/>
            <person name="Weinstock G.M."/>
        </authorList>
    </citation>
    <scope>NUCLEOTIDE SEQUENCE [LARGE SCALE GENOMIC DNA]</scope>
    <source>
        <strain>USA300 / TCH1516</strain>
    </source>
</reference>
<evidence type="ECO:0000255" key="1">
    <source>
        <dbReference type="HAMAP-Rule" id="MF_00044"/>
    </source>
</evidence>
<gene>
    <name evidence="1" type="primary">aspS</name>
    <name type="ordered locus">USA300HOU_1628</name>
</gene>
<feature type="chain" id="PRO_1000074726" description="Aspartate--tRNA ligase">
    <location>
        <begin position="1"/>
        <end position="588"/>
    </location>
</feature>
<feature type="region of interest" description="Aspartate" evidence="1">
    <location>
        <begin position="201"/>
        <end position="204"/>
    </location>
</feature>
<feature type="binding site" evidence="1">
    <location>
        <position position="177"/>
    </location>
    <ligand>
        <name>L-aspartate</name>
        <dbReference type="ChEBI" id="CHEBI:29991"/>
    </ligand>
</feature>
<feature type="binding site" evidence="1">
    <location>
        <begin position="223"/>
        <end position="225"/>
    </location>
    <ligand>
        <name>ATP</name>
        <dbReference type="ChEBI" id="CHEBI:30616"/>
    </ligand>
</feature>
<feature type="binding site" evidence="1">
    <location>
        <position position="223"/>
    </location>
    <ligand>
        <name>L-aspartate</name>
        <dbReference type="ChEBI" id="CHEBI:29991"/>
    </ligand>
</feature>
<feature type="binding site" evidence="1">
    <location>
        <position position="232"/>
    </location>
    <ligand>
        <name>ATP</name>
        <dbReference type="ChEBI" id="CHEBI:30616"/>
    </ligand>
</feature>
<feature type="binding site" evidence="1">
    <location>
        <position position="451"/>
    </location>
    <ligand>
        <name>L-aspartate</name>
        <dbReference type="ChEBI" id="CHEBI:29991"/>
    </ligand>
</feature>
<feature type="binding site" evidence="1">
    <location>
        <position position="485"/>
    </location>
    <ligand>
        <name>ATP</name>
        <dbReference type="ChEBI" id="CHEBI:30616"/>
    </ligand>
</feature>
<feature type="binding site" evidence="1">
    <location>
        <position position="492"/>
    </location>
    <ligand>
        <name>L-aspartate</name>
        <dbReference type="ChEBI" id="CHEBI:29991"/>
    </ligand>
</feature>
<feature type="binding site" evidence="1">
    <location>
        <begin position="537"/>
        <end position="540"/>
    </location>
    <ligand>
        <name>ATP</name>
        <dbReference type="ChEBI" id="CHEBI:30616"/>
    </ligand>
</feature>
<dbReference type="EC" id="6.1.1.12" evidence="1"/>
<dbReference type="EMBL" id="CP000730">
    <property type="protein sequence ID" value="ABX29635.1"/>
    <property type="molecule type" value="Genomic_DNA"/>
</dbReference>
<dbReference type="RefSeq" id="WP_000044799.1">
    <property type="nucleotide sequence ID" value="NC_010079.1"/>
</dbReference>
<dbReference type="SMR" id="A8Z2F7"/>
<dbReference type="KEGG" id="sax:USA300HOU_1628"/>
<dbReference type="HOGENOM" id="CLU_014330_3_2_9"/>
<dbReference type="GO" id="GO:0005737">
    <property type="term" value="C:cytoplasm"/>
    <property type="evidence" value="ECO:0007669"/>
    <property type="project" value="UniProtKB-SubCell"/>
</dbReference>
<dbReference type="GO" id="GO:0004815">
    <property type="term" value="F:aspartate-tRNA ligase activity"/>
    <property type="evidence" value="ECO:0007669"/>
    <property type="project" value="UniProtKB-UniRule"/>
</dbReference>
<dbReference type="GO" id="GO:0005524">
    <property type="term" value="F:ATP binding"/>
    <property type="evidence" value="ECO:0007669"/>
    <property type="project" value="UniProtKB-UniRule"/>
</dbReference>
<dbReference type="GO" id="GO:0140096">
    <property type="term" value="F:catalytic activity, acting on a protein"/>
    <property type="evidence" value="ECO:0007669"/>
    <property type="project" value="UniProtKB-ARBA"/>
</dbReference>
<dbReference type="GO" id="GO:0003676">
    <property type="term" value="F:nucleic acid binding"/>
    <property type="evidence" value="ECO:0007669"/>
    <property type="project" value="InterPro"/>
</dbReference>
<dbReference type="GO" id="GO:0016740">
    <property type="term" value="F:transferase activity"/>
    <property type="evidence" value="ECO:0007669"/>
    <property type="project" value="UniProtKB-ARBA"/>
</dbReference>
<dbReference type="GO" id="GO:0006422">
    <property type="term" value="P:aspartyl-tRNA aminoacylation"/>
    <property type="evidence" value="ECO:0007669"/>
    <property type="project" value="UniProtKB-UniRule"/>
</dbReference>
<dbReference type="CDD" id="cd00777">
    <property type="entry name" value="AspRS_core"/>
    <property type="match status" value="1"/>
</dbReference>
<dbReference type="CDD" id="cd04317">
    <property type="entry name" value="EcAspRS_like_N"/>
    <property type="match status" value="1"/>
</dbReference>
<dbReference type="Gene3D" id="3.30.930.10">
    <property type="entry name" value="Bira Bifunctional Protein, Domain 2"/>
    <property type="match status" value="1"/>
</dbReference>
<dbReference type="Gene3D" id="3.30.1360.30">
    <property type="entry name" value="GAD-like domain"/>
    <property type="match status" value="1"/>
</dbReference>
<dbReference type="Gene3D" id="2.40.50.140">
    <property type="entry name" value="Nucleic acid-binding proteins"/>
    <property type="match status" value="1"/>
</dbReference>
<dbReference type="HAMAP" id="MF_00044">
    <property type="entry name" value="Asp_tRNA_synth_type1"/>
    <property type="match status" value="1"/>
</dbReference>
<dbReference type="InterPro" id="IPR004364">
    <property type="entry name" value="Aa-tRNA-synt_II"/>
</dbReference>
<dbReference type="InterPro" id="IPR006195">
    <property type="entry name" value="aa-tRNA-synth_II"/>
</dbReference>
<dbReference type="InterPro" id="IPR045864">
    <property type="entry name" value="aa-tRNA-synth_II/BPL/LPL"/>
</dbReference>
<dbReference type="InterPro" id="IPR004524">
    <property type="entry name" value="Asp-tRNA-ligase_1"/>
</dbReference>
<dbReference type="InterPro" id="IPR047089">
    <property type="entry name" value="Asp-tRNA-ligase_1_N"/>
</dbReference>
<dbReference type="InterPro" id="IPR002312">
    <property type="entry name" value="Asp/Asn-tRNA-synth_IIb"/>
</dbReference>
<dbReference type="InterPro" id="IPR047090">
    <property type="entry name" value="AspRS_core"/>
</dbReference>
<dbReference type="InterPro" id="IPR004115">
    <property type="entry name" value="GAD-like_sf"/>
</dbReference>
<dbReference type="InterPro" id="IPR029351">
    <property type="entry name" value="GAD_dom"/>
</dbReference>
<dbReference type="InterPro" id="IPR012340">
    <property type="entry name" value="NA-bd_OB-fold"/>
</dbReference>
<dbReference type="InterPro" id="IPR004365">
    <property type="entry name" value="NA-bd_OB_tRNA"/>
</dbReference>
<dbReference type="NCBIfam" id="TIGR00459">
    <property type="entry name" value="aspS_bact"/>
    <property type="match status" value="1"/>
</dbReference>
<dbReference type="NCBIfam" id="NF001750">
    <property type="entry name" value="PRK00476.1"/>
    <property type="match status" value="1"/>
</dbReference>
<dbReference type="PANTHER" id="PTHR22594:SF5">
    <property type="entry name" value="ASPARTATE--TRNA LIGASE, MITOCHONDRIAL"/>
    <property type="match status" value="1"/>
</dbReference>
<dbReference type="PANTHER" id="PTHR22594">
    <property type="entry name" value="ASPARTYL/LYSYL-TRNA SYNTHETASE"/>
    <property type="match status" value="1"/>
</dbReference>
<dbReference type="Pfam" id="PF02938">
    <property type="entry name" value="GAD"/>
    <property type="match status" value="1"/>
</dbReference>
<dbReference type="Pfam" id="PF00152">
    <property type="entry name" value="tRNA-synt_2"/>
    <property type="match status" value="1"/>
</dbReference>
<dbReference type="Pfam" id="PF01336">
    <property type="entry name" value="tRNA_anti-codon"/>
    <property type="match status" value="1"/>
</dbReference>
<dbReference type="PRINTS" id="PR01042">
    <property type="entry name" value="TRNASYNTHASP"/>
</dbReference>
<dbReference type="SUPFAM" id="SSF55681">
    <property type="entry name" value="Class II aaRS and biotin synthetases"/>
    <property type="match status" value="1"/>
</dbReference>
<dbReference type="SUPFAM" id="SSF55261">
    <property type="entry name" value="GAD domain-like"/>
    <property type="match status" value="1"/>
</dbReference>
<dbReference type="SUPFAM" id="SSF50249">
    <property type="entry name" value="Nucleic acid-binding proteins"/>
    <property type="match status" value="1"/>
</dbReference>
<dbReference type="PROSITE" id="PS50862">
    <property type="entry name" value="AA_TRNA_LIGASE_II"/>
    <property type="match status" value="1"/>
</dbReference>
<keyword id="KW-0030">Aminoacyl-tRNA synthetase</keyword>
<keyword id="KW-0067">ATP-binding</keyword>
<keyword id="KW-0963">Cytoplasm</keyword>
<keyword id="KW-0436">Ligase</keyword>
<keyword id="KW-0547">Nucleotide-binding</keyword>
<keyword id="KW-0648">Protein biosynthesis</keyword>
<protein>
    <recommendedName>
        <fullName evidence="1">Aspartate--tRNA ligase</fullName>
        <ecNumber evidence="1">6.1.1.12</ecNumber>
    </recommendedName>
    <alternativeName>
        <fullName evidence="1">Aspartyl-tRNA synthetase</fullName>
        <shortName evidence="1">AspRS</shortName>
    </alternativeName>
</protein>
<comment type="function">
    <text evidence="1">Catalyzes the attachment of L-aspartate to tRNA(Asp) in a two-step reaction: L-aspartate is first activated by ATP to form Asp-AMP and then transferred to the acceptor end of tRNA(Asp).</text>
</comment>
<comment type="catalytic activity">
    <reaction evidence="1">
        <text>tRNA(Asp) + L-aspartate + ATP = L-aspartyl-tRNA(Asp) + AMP + diphosphate</text>
        <dbReference type="Rhea" id="RHEA:19649"/>
        <dbReference type="Rhea" id="RHEA-COMP:9660"/>
        <dbReference type="Rhea" id="RHEA-COMP:9678"/>
        <dbReference type="ChEBI" id="CHEBI:29991"/>
        <dbReference type="ChEBI" id="CHEBI:30616"/>
        <dbReference type="ChEBI" id="CHEBI:33019"/>
        <dbReference type="ChEBI" id="CHEBI:78442"/>
        <dbReference type="ChEBI" id="CHEBI:78516"/>
        <dbReference type="ChEBI" id="CHEBI:456215"/>
        <dbReference type="EC" id="6.1.1.12"/>
    </reaction>
</comment>
<comment type="subunit">
    <text evidence="1">Homodimer.</text>
</comment>
<comment type="subcellular location">
    <subcellularLocation>
        <location evidence="1">Cytoplasm</location>
    </subcellularLocation>
</comment>
<comment type="similarity">
    <text evidence="1">Belongs to the class-II aminoacyl-tRNA synthetase family. Type 1 subfamily.</text>
</comment>
<organism>
    <name type="scientific">Staphylococcus aureus (strain USA300 / TCH1516)</name>
    <dbReference type="NCBI Taxonomy" id="451516"/>
    <lineage>
        <taxon>Bacteria</taxon>
        <taxon>Bacillati</taxon>
        <taxon>Bacillota</taxon>
        <taxon>Bacilli</taxon>
        <taxon>Bacillales</taxon>
        <taxon>Staphylococcaceae</taxon>
        <taxon>Staphylococcus</taxon>
    </lineage>
</organism>
<sequence length="588" mass="66599">MSKRTTYCGLVTEAFLGQEITLKGWVNNRRDLGGLIFVDLRDREGIVQVVFNPAFSEEALKIAETVRSEYVVEVQGTVTKRDPETVNPKIKTGQVEVQVTNIKVINKSETPPFSINEENVNVDENIRLKYRYLDLRRQELAQTFKMRHQITRSIRQYLDDEGFFDIETPVLTKSTPEGARDYLVPSRVHDGEFYALPQSPQLFKQLLMISGFDKYYQIVKCFRDEDLRADRQPEFTQVDIEMSFVDQEDVMQMGEEMLKKVVKEVKGVEINGAFPRMTYKEAMRRYGSDKPDTRFEMELIDVSQLGRDMDFKVFKDTVENDGEIKAIVAKGAAEQYTRKDMDALTEFVNIYGAKGLAWVKVVEDGLTGPIGRFFETENVETLLTLTGAEAGDLVMFVADKPNVVAQSLGALRVKLAKELGLIDETKLNFLWVTDWPLLEYDEDAKRYVAAHHPFTSPKEADIAKLGTAPEEAEANAYDIVLNGYELGGGSIRIHDGELQEKMFEVLGFTKEQAQEQFGFLLDAFKYGAPPHGGIALGLDRLVMLLTNRTNLRDTIAFPKTASATCLLTNAPGEVSDKQLEELSLRIRH</sequence>
<proteinExistence type="inferred from homology"/>